<comment type="function">
    <text evidence="4">Functions in vesicle-trafficking events required for site-specific cell wall modifications during pollen germination and for anchoring of the cell plate to the mother wall at the correct cortical position.</text>
</comment>
<comment type="subunit">
    <text evidence="5">Interacts with CLC2 and CHC2.</text>
</comment>
<comment type="interaction">
    <interactant intactId="EBI-4412119">
        <id>F4J8D3</id>
    </interactant>
    <interactant intactId="EBI-4412194">
        <id>Q0WLB5</id>
        <label>CHC2</label>
    </interactant>
    <organismsDiffer>false</organismsDiffer>
    <experiments>2</experiments>
</comment>
<comment type="interaction">
    <interactant intactId="EBI-4412119">
        <id>F4J8D3</id>
    </interactant>
    <interactant intactId="EBI-4406025">
        <id>O04209</id>
        <label>CLC2</label>
    </interactant>
    <organismsDiffer>false</organismsDiffer>
    <experiments>5</experiments>
</comment>
<comment type="interaction">
    <interactant intactId="EBI-4412119">
        <id>F4J8D3</id>
    </interactant>
    <interactant intactId="EBI-9346324">
        <id>Q9FKM4</id>
        <label>TML</label>
    </interactant>
    <organismsDiffer>false</organismsDiffer>
    <experiments>10</experiments>
</comment>
<comment type="interaction">
    <interactant intactId="EBI-4412119">
        <id>F4J8D3</id>
    </interactant>
    <interactant intactId="EBI-4412119">
        <id>F4J8D3</id>
        <label>TPLATE</label>
    </interactant>
    <organismsDiffer>false</organismsDiffer>
    <experiments>2</experiments>
</comment>
<comment type="interaction">
    <interactant intactId="EBI-4412119">
        <id>F4J8D3</id>
    </interactant>
    <interactant intactId="EBI-9346344">
        <id>Q0WLS8</id>
    </interactant>
    <organismsDiffer>false</organismsDiffer>
    <experiments>6</experiments>
</comment>
<comment type="subcellular location">
    <subcellularLocation>
        <location evidence="3 4 5">Cytoplasm</location>
        <location evidence="3 4 5">Cytoskeleton</location>
        <location evidence="3 4 5">Phragmoplast</location>
    </subcellularLocation>
    <text>Localized in the forming cell plate and the cortical division zone (CDZ) during cytokinesis.</text>
</comment>
<comment type="tissue specificity">
    <text evidence="4">Expressed at the pollen tube exit site in germinating pollen.</text>
</comment>
<comment type="disruption phenotype">
    <text evidence="4">Male sterility due to the production of shriveled pollen unable to germinate.</text>
</comment>
<comment type="similarity">
    <text evidence="6">Belongs to the TPLATE family.</text>
</comment>
<comment type="sequence caution" evidence="6">
    <conflict type="erroneous gene model prediction">
        <sequence resource="EMBL-CDS" id="AAF01560"/>
    </conflict>
</comment>
<comment type="sequence caution" evidence="6">
    <conflict type="erroneous gene model prediction">
        <sequence resource="EMBL-CDS" id="AAF03433"/>
    </conflict>
</comment>
<proteinExistence type="evidence at protein level"/>
<evidence type="ECO:0000255" key="1"/>
<evidence type="ECO:0000256" key="2">
    <source>
        <dbReference type="SAM" id="MobiDB-lite"/>
    </source>
</evidence>
<evidence type="ECO:0000269" key="3">
    <source>
    </source>
</evidence>
<evidence type="ECO:0000269" key="4">
    <source>
    </source>
</evidence>
<evidence type="ECO:0000269" key="5">
    <source>
    </source>
</evidence>
<evidence type="ECO:0000305" key="6"/>
<evidence type="ECO:0007744" key="7">
    <source>
    </source>
</evidence>
<evidence type="ECO:0007744" key="8">
    <source>
    </source>
</evidence>
<keyword id="KW-0106">Calcium</keyword>
<keyword id="KW-0175">Coiled coil</keyword>
<keyword id="KW-0963">Cytoplasm</keyword>
<keyword id="KW-0206">Cytoskeleton</keyword>
<keyword id="KW-0597">Phosphoprotein</keyword>
<keyword id="KW-1185">Reference proteome</keyword>
<dbReference type="EMBL" id="AC009325">
    <property type="protein sequence ID" value="AAF01560.1"/>
    <property type="status" value="ALT_SEQ"/>
    <property type="molecule type" value="Genomic_DNA"/>
</dbReference>
<dbReference type="EMBL" id="AC010797">
    <property type="protein sequence ID" value="AAF03433.1"/>
    <property type="status" value="ALT_SEQ"/>
    <property type="molecule type" value="Genomic_DNA"/>
</dbReference>
<dbReference type="EMBL" id="CP002686">
    <property type="protein sequence ID" value="AEE73713.1"/>
    <property type="molecule type" value="Genomic_DNA"/>
</dbReference>
<dbReference type="EMBL" id="BT004227">
    <property type="protein sequence ID" value="AAO42242.1"/>
    <property type="molecule type" value="mRNA"/>
</dbReference>
<dbReference type="RefSeq" id="NP_186827.2">
    <property type="nucleotide sequence ID" value="NM_111044.4"/>
</dbReference>
<dbReference type="BioGRID" id="6414">
    <property type="interactions" value="29"/>
</dbReference>
<dbReference type="DIP" id="DIP-59588N"/>
<dbReference type="FunCoup" id="F4J8D3">
    <property type="interactions" value="2205"/>
</dbReference>
<dbReference type="IntAct" id="F4J8D3">
    <property type="interactions" value="11"/>
</dbReference>
<dbReference type="STRING" id="3702.F4J8D3"/>
<dbReference type="iPTMnet" id="F4J8D3"/>
<dbReference type="PaxDb" id="3702-AT3G01780.1"/>
<dbReference type="ProteomicsDB" id="232440"/>
<dbReference type="EnsemblPlants" id="AT3G01780.1">
    <property type="protein sequence ID" value="AT3G01780.1"/>
    <property type="gene ID" value="AT3G01780"/>
</dbReference>
<dbReference type="GeneID" id="821081"/>
<dbReference type="Gramene" id="AT3G01780.1">
    <property type="protein sequence ID" value="AT3G01780.1"/>
    <property type="gene ID" value="AT3G01780"/>
</dbReference>
<dbReference type="KEGG" id="ath:AT3G01780"/>
<dbReference type="Araport" id="AT3G01780"/>
<dbReference type="TAIR" id="AT3G01780">
    <property type="gene designation" value="TPLATE"/>
</dbReference>
<dbReference type="eggNOG" id="ENOG502QPK6">
    <property type="taxonomic scope" value="Eukaryota"/>
</dbReference>
<dbReference type="HOGENOM" id="CLU_008706_0_0_1"/>
<dbReference type="InParanoid" id="F4J8D3"/>
<dbReference type="OMA" id="WEIVCTG"/>
<dbReference type="CD-CODE" id="4299E36E">
    <property type="entry name" value="Nucleolus"/>
</dbReference>
<dbReference type="PRO" id="PR:F4J8D3"/>
<dbReference type="Proteomes" id="UP000006548">
    <property type="component" value="Chromosome 3"/>
</dbReference>
<dbReference type="ExpressionAtlas" id="F4J8D3">
    <property type="expression patterns" value="baseline and differential"/>
</dbReference>
<dbReference type="GO" id="GO:0009504">
    <property type="term" value="C:cell plate"/>
    <property type="evidence" value="ECO:0000314"/>
    <property type="project" value="TAIR"/>
</dbReference>
<dbReference type="GO" id="GO:0005737">
    <property type="term" value="C:cytoplasm"/>
    <property type="evidence" value="ECO:0007005"/>
    <property type="project" value="TAIR"/>
</dbReference>
<dbReference type="GO" id="GO:0005856">
    <property type="term" value="C:cytoskeleton"/>
    <property type="evidence" value="ECO:0007669"/>
    <property type="project" value="UniProtKB-KW"/>
</dbReference>
<dbReference type="GO" id="GO:0005829">
    <property type="term" value="C:cytosol"/>
    <property type="evidence" value="ECO:0007005"/>
    <property type="project" value="TAIR"/>
</dbReference>
<dbReference type="GO" id="GO:0005634">
    <property type="term" value="C:nucleus"/>
    <property type="evidence" value="ECO:0007005"/>
    <property type="project" value="TAIR"/>
</dbReference>
<dbReference type="GO" id="GO:0009524">
    <property type="term" value="C:phragmoplast"/>
    <property type="evidence" value="ECO:0007005"/>
    <property type="project" value="TAIR"/>
</dbReference>
<dbReference type="GO" id="GO:0005886">
    <property type="term" value="C:plasma membrane"/>
    <property type="evidence" value="ECO:0000314"/>
    <property type="project" value="TAIR"/>
</dbReference>
<dbReference type="GO" id="GO:0009506">
    <property type="term" value="C:plasmodesma"/>
    <property type="evidence" value="ECO:0007005"/>
    <property type="project" value="TAIR"/>
</dbReference>
<dbReference type="GO" id="GO:0042802">
    <property type="term" value="F:identical protein binding"/>
    <property type="evidence" value="ECO:0000353"/>
    <property type="project" value="IntAct"/>
</dbReference>
<dbReference type="GO" id="GO:0000911">
    <property type="term" value="P:cytokinesis by cell plate formation"/>
    <property type="evidence" value="ECO:0000315"/>
    <property type="project" value="TAIR"/>
</dbReference>
<dbReference type="GO" id="GO:0006897">
    <property type="term" value="P:endocytosis"/>
    <property type="evidence" value="ECO:0000314"/>
    <property type="project" value="TAIR"/>
</dbReference>
<dbReference type="GO" id="GO:0009555">
    <property type="term" value="P:pollen development"/>
    <property type="evidence" value="ECO:0000315"/>
    <property type="project" value="TAIR"/>
</dbReference>
<dbReference type="FunFam" id="1.25.10.10:FF:000835">
    <property type="entry name" value="Protein TPLATE"/>
    <property type="match status" value="1"/>
</dbReference>
<dbReference type="Gene3D" id="1.25.10.10">
    <property type="entry name" value="Leucine-rich Repeat Variant"/>
    <property type="match status" value="1"/>
</dbReference>
<dbReference type="InterPro" id="IPR011989">
    <property type="entry name" value="ARM-like"/>
</dbReference>
<dbReference type="InterPro" id="IPR016024">
    <property type="entry name" value="ARM-type_fold"/>
</dbReference>
<dbReference type="InterPro" id="IPR037501">
    <property type="entry name" value="TPLATE"/>
</dbReference>
<dbReference type="PANTHER" id="PTHR36029:SF1">
    <property type="entry name" value="PROTEIN TPLATE"/>
    <property type="match status" value="1"/>
</dbReference>
<dbReference type="PANTHER" id="PTHR36029">
    <property type="entry name" value="TSET COMPLEX MEMBER TSTA"/>
    <property type="match status" value="1"/>
</dbReference>
<dbReference type="SUPFAM" id="SSF48371">
    <property type="entry name" value="ARM repeat"/>
    <property type="match status" value="1"/>
</dbReference>
<organism>
    <name type="scientific">Arabidopsis thaliana</name>
    <name type="common">Mouse-ear cress</name>
    <dbReference type="NCBI Taxonomy" id="3702"/>
    <lineage>
        <taxon>Eukaryota</taxon>
        <taxon>Viridiplantae</taxon>
        <taxon>Streptophyta</taxon>
        <taxon>Embryophyta</taxon>
        <taxon>Tracheophyta</taxon>
        <taxon>Spermatophyta</taxon>
        <taxon>Magnoliopsida</taxon>
        <taxon>eudicotyledons</taxon>
        <taxon>Gunneridae</taxon>
        <taxon>Pentapetalae</taxon>
        <taxon>rosids</taxon>
        <taxon>malvids</taxon>
        <taxon>Brassicales</taxon>
        <taxon>Brassicaceae</taxon>
        <taxon>Camelineae</taxon>
        <taxon>Arabidopsis</taxon>
    </lineage>
</organism>
<reference key="1">
    <citation type="journal article" date="2000" name="Nature">
        <title>Sequence and analysis of chromosome 3 of the plant Arabidopsis thaliana.</title>
        <authorList>
            <person name="Salanoubat M."/>
            <person name="Lemcke K."/>
            <person name="Rieger M."/>
            <person name="Ansorge W."/>
            <person name="Unseld M."/>
            <person name="Fartmann B."/>
            <person name="Valle G."/>
            <person name="Bloecker H."/>
            <person name="Perez-Alonso M."/>
            <person name="Obermaier B."/>
            <person name="Delseny M."/>
            <person name="Boutry M."/>
            <person name="Grivell L.A."/>
            <person name="Mache R."/>
            <person name="Puigdomenech P."/>
            <person name="De Simone V."/>
            <person name="Choisne N."/>
            <person name="Artiguenave F."/>
            <person name="Robert C."/>
            <person name="Brottier P."/>
            <person name="Wincker P."/>
            <person name="Cattolico L."/>
            <person name="Weissenbach J."/>
            <person name="Saurin W."/>
            <person name="Quetier F."/>
            <person name="Schaefer M."/>
            <person name="Mueller-Auer S."/>
            <person name="Gabel C."/>
            <person name="Fuchs M."/>
            <person name="Benes V."/>
            <person name="Wurmbach E."/>
            <person name="Drzonek H."/>
            <person name="Erfle H."/>
            <person name="Jordan N."/>
            <person name="Bangert S."/>
            <person name="Wiedelmann R."/>
            <person name="Kranz H."/>
            <person name="Voss H."/>
            <person name="Holland R."/>
            <person name="Brandt P."/>
            <person name="Nyakatura G."/>
            <person name="Vezzi A."/>
            <person name="D'Angelo M."/>
            <person name="Pallavicini A."/>
            <person name="Toppo S."/>
            <person name="Simionati B."/>
            <person name="Conrad A."/>
            <person name="Hornischer K."/>
            <person name="Kauer G."/>
            <person name="Loehnert T.-H."/>
            <person name="Nordsiek G."/>
            <person name="Reichelt J."/>
            <person name="Scharfe M."/>
            <person name="Schoen O."/>
            <person name="Bargues M."/>
            <person name="Terol J."/>
            <person name="Climent J."/>
            <person name="Navarro P."/>
            <person name="Collado C."/>
            <person name="Perez-Perez A."/>
            <person name="Ottenwaelder B."/>
            <person name="Duchemin D."/>
            <person name="Cooke R."/>
            <person name="Laudie M."/>
            <person name="Berger-Llauro C."/>
            <person name="Purnelle B."/>
            <person name="Masuy D."/>
            <person name="de Haan M."/>
            <person name="Maarse A.C."/>
            <person name="Alcaraz J.-P."/>
            <person name="Cottet A."/>
            <person name="Casacuberta E."/>
            <person name="Monfort A."/>
            <person name="Argiriou A."/>
            <person name="Flores M."/>
            <person name="Liguori R."/>
            <person name="Vitale D."/>
            <person name="Mannhaupt G."/>
            <person name="Haase D."/>
            <person name="Schoof H."/>
            <person name="Rudd S."/>
            <person name="Zaccaria P."/>
            <person name="Mewes H.-W."/>
            <person name="Mayer K.F.X."/>
            <person name="Kaul S."/>
            <person name="Town C.D."/>
            <person name="Koo H.L."/>
            <person name="Tallon L.J."/>
            <person name="Jenkins J."/>
            <person name="Rooney T."/>
            <person name="Rizzo M."/>
            <person name="Walts A."/>
            <person name="Utterback T."/>
            <person name="Fujii C.Y."/>
            <person name="Shea T.P."/>
            <person name="Creasy T.H."/>
            <person name="Haas B."/>
            <person name="Maiti R."/>
            <person name="Wu D."/>
            <person name="Peterson J."/>
            <person name="Van Aken S."/>
            <person name="Pai G."/>
            <person name="Militscher J."/>
            <person name="Sellers P."/>
            <person name="Gill J.E."/>
            <person name="Feldblyum T.V."/>
            <person name="Preuss D."/>
            <person name="Lin X."/>
            <person name="Nierman W.C."/>
            <person name="Salzberg S.L."/>
            <person name="White O."/>
            <person name="Venter J.C."/>
            <person name="Fraser C.M."/>
            <person name="Kaneko T."/>
            <person name="Nakamura Y."/>
            <person name="Sato S."/>
            <person name="Kato T."/>
            <person name="Asamizu E."/>
            <person name="Sasamoto S."/>
            <person name="Kimura T."/>
            <person name="Idesawa K."/>
            <person name="Kawashima K."/>
            <person name="Kishida Y."/>
            <person name="Kiyokawa C."/>
            <person name="Kohara M."/>
            <person name="Matsumoto M."/>
            <person name="Matsuno A."/>
            <person name="Muraki A."/>
            <person name="Nakayama S."/>
            <person name="Nakazaki N."/>
            <person name="Shinpo S."/>
            <person name="Takeuchi C."/>
            <person name="Wada T."/>
            <person name="Watanabe A."/>
            <person name="Yamada M."/>
            <person name="Yasuda M."/>
            <person name="Tabata S."/>
        </authorList>
    </citation>
    <scope>NUCLEOTIDE SEQUENCE [LARGE SCALE GENOMIC DNA]</scope>
    <source>
        <strain>cv. Columbia</strain>
    </source>
</reference>
<reference key="2">
    <citation type="journal article" date="2017" name="Plant J.">
        <title>Araport11: a complete reannotation of the Arabidopsis thaliana reference genome.</title>
        <authorList>
            <person name="Cheng C.Y."/>
            <person name="Krishnakumar V."/>
            <person name="Chan A.P."/>
            <person name="Thibaud-Nissen F."/>
            <person name="Schobel S."/>
            <person name="Town C.D."/>
        </authorList>
    </citation>
    <scope>GENOME REANNOTATION</scope>
    <source>
        <strain>cv. Columbia</strain>
    </source>
</reference>
<reference key="3">
    <citation type="journal article" date="2003" name="Science">
        <title>Empirical analysis of transcriptional activity in the Arabidopsis genome.</title>
        <authorList>
            <person name="Yamada K."/>
            <person name="Lim J."/>
            <person name="Dale J.M."/>
            <person name="Chen H."/>
            <person name="Shinn P."/>
            <person name="Palm C.J."/>
            <person name="Southwick A.M."/>
            <person name="Wu H.C."/>
            <person name="Kim C.J."/>
            <person name="Nguyen M."/>
            <person name="Pham P.K."/>
            <person name="Cheuk R.F."/>
            <person name="Karlin-Newmann G."/>
            <person name="Liu S.X."/>
            <person name="Lam B."/>
            <person name="Sakano H."/>
            <person name="Wu T."/>
            <person name="Yu G."/>
            <person name="Miranda M."/>
            <person name="Quach H.L."/>
            <person name="Tripp M."/>
            <person name="Chang C.H."/>
            <person name="Lee J.M."/>
            <person name="Toriumi M.J."/>
            <person name="Chan M.M."/>
            <person name="Tang C.C."/>
            <person name="Onodera C.S."/>
            <person name="Deng J.M."/>
            <person name="Akiyama K."/>
            <person name="Ansari Y."/>
            <person name="Arakawa T."/>
            <person name="Banh J."/>
            <person name="Banno F."/>
            <person name="Bowser L."/>
            <person name="Brooks S.Y."/>
            <person name="Carninci P."/>
            <person name="Chao Q."/>
            <person name="Choy N."/>
            <person name="Enju A."/>
            <person name="Goldsmith A.D."/>
            <person name="Gurjal M."/>
            <person name="Hansen N.F."/>
            <person name="Hayashizaki Y."/>
            <person name="Johnson-Hopson C."/>
            <person name="Hsuan V.W."/>
            <person name="Iida K."/>
            <person name="Karnes M."/>
            <person name="Khan S."/>
            <person name="Koesema E."/>
            <person name="Ishida J."/>
            <person name="Jiang P.X."/>
            <person name="Jones T."/>
            <person name="Kawai J."/>
            <person name="Kamiya A."/>
            <person name="Meyers C."/>
            <person name="Nakajima M."/>
            <person name="Narusaka M."/>
            <person name="Seki M."/>
            <person name="Sakurai T."/>
            <person name="Satou M."/>
            <person name="Tamse R."/>
            <person name="Vaysberg M."/>
            <person name="Wallender E.K."/>
            <person name="Wong C."/>
            <person name="Yamamura Y."/>
            <person name="Yuan S."/>
            <person name="Shinozaki K."/>
            <person name="Davis R.W."/>
            <person name="Theologis A."/>
            <person name="Ecker J.R."/>
        </authorList>
    </citation>
    <scope>NUCLEOTIDE SEQUENCE [LARGE SCALE MRNA] OF 1-1135</scope>
    <source>
        <strain>cv. Columbia</strain>
    </source>
</reference>
<reference key="4">
    <citation type="journal article" date="2004" name="Plant J.">
        <title>Molecular dissection of plant cytokinesis and phragmoplast structure: a survey of GFP-tagged proteins.</title>
        <authorList>
            <person name="Van Damme D."/>
            <person name="Bouget F.-Y."/>
            <person name="Van Poucke K."/>
            <person name="Inze D."/>
            <person name="Geelen D."/>
        </authorList>
    </citation>
    <scope>SUBCELLULAR LOCATION</scope>
</reference>
<reference key="5">
    <citation type="journal article" date="2006" name="Plant Cell">
        <title>Somatic cytokinesis and pollen maturation in Arabidopsis depend on TPLATE, which has domains similar to coat proteins.</title>
        <authorList>
            <person name="Van Damme D."/>
            <person name="Coutuer S."/>
            <person name="De Rycke R."/>
            <person name="Bouget F.Y."/>
            <person name="Inze D."/>
            <person name="Geelen D."/>
        </authorList>
    </citation>
    <scope>DISRUPTION PHENOTYPE</scope>
    <scope>FUNCTION</scope>
    <scope>SUBCELLULAR LOCATION</scope>
    <scope>TISSUE SPECIFICITY</scope>
</reference>
<reference key="6">
    <citation type="journal article" date="2009" name="J. Proteomics">
        <title>Phosphoproteomic analysis of nuclei-enriched fractions from Arabidopsis thaliana.</title>
        <authorList>
            <person name="Jones A.M.E."/>
            <person name="MacLean D."/>
            <person name="Studholme D.J."/>
            <person name="Serna-Sanz A."/>
            <person name="Andreasson E."/>
            <person name="Rathjen J.P."/>
            <person name="Peck S.C."/>
        </authorList>
    </citation>
    <scope>PHOSPHORYLATION [LARGE SCALE ANALYSIS] AT SER-1100</scope>
    <scope>IDENTIFICATION BY MASS SPECTROMETRY [LARGE SCALE ANALYSIS]</scope>
    <source>
        <strain>cv. Columbia</strain>
    </source>
</reference>
<reference key="7">
    <citation type="journal article" date="2009" name="Plant Physiol.">
        <title>Large-scale Arabidopsis phosphoproteome profiling reveals novel chloroplast kinase substrates and phosphorylation networks.</title>
        <authorList>
            <person name="Reiland S."/>
            <person name="Messerli G."/>
            <person name="Baerenfaller K."/>
            <person name="Gerrits B."/>
            <person name="Endler A."/>
            <person name="Grossmann J."/>
            <person name="Gruissem W."/>
            <person name="Baginsky S."/>
        </authorList>
    </citation>
    <scope>PHOSPHORYLATION [LARGE SCALE ANALYSIS] AT SER-1100</scope>
    <scope>IDENTIFICATION BY MASS SPECTROMETRY [LARGE SCALE ANALYSIS]</scope>
</reference>
<reference key="8">
    <citation type="journal article" date="2011" name="Proc. Natl. Acad. Sci. U.S.A.">
        <title>Adaptin-like protein TPLATE and clathrin recruitment during plant somatic cytokinesis occurs via two distinct pathways.</title>
        <authorList>
            <person name="Van Damme D."/>
            <person name="Gadeyne A."/>
            <person name="Vanstraelen M."/>
            <person name="Inze D."/>
            <person name="Van Montagu M.C."/>
            <person name="De Jaeger G."/>
            <person name="Russinova E."/>
            <person name="Geelen D."/>
        </authorList>
    </citation>
    <scope>SUBCELLULAR LOCATION</scope>
    <scope>INTERACTION WITH CLC2 AND CHC2</scope>
</reference>
<accession>F4J8D3</accession>
<accession>Q84W49</accession>
<accession>Q9S7T0</accession>
<protein>
    <recommendedName>
        <fullName>Protein TPLATE</fullName>
    </recommendedName>
</protein>
<sequence length="1176" mass="130908">MDILFAQIQADLRSNDALRQSSALLQALQQSAAGRDISVIAKSAVEEIVASPASAVCKKLAFDLIRSTRLTPDLWDTVCSGVKTDLHFPDPDVTAAAVSILAALPAFSLPKLISDCSSEIASCFDSPSDNLRFSITETLGCILARDDLVTLCENNVGLLDKVSNWWARIGQNMLDKSDAVSKVAFESVGRLFQEFDSKRMSRLAGDKLVDSENSLAIRSKWVSSMVDIVWRKRSALMARSLVLPVETFRATVFPLVFAVKAVASGSVEVIRQLSKASSAAAAANATVVDSNAEKLVGVSDLVTHLAPFLASSLDPALIFEVGINMLYLADVAGGKPEWASQSIIAILTLWDRQEFSSARESIVRAVVTNLHLLDLHMQVSLFRRLLLMVRNLRAESDRMHALACICRTALCVHLFARESARRGQKPLPGTDIISLFEDARIKDDLNSVTSKSLFREELVAMLVESCFQLSLPLPEQKNSGMESRVIGALAYGTGYGALNWTEPALEVVEVCRPCVKWDCDGRTYAVDCYLKLLVRLCHIYDTRGGVKRLKDGASQDQILNETRLQNLQRELVKDLQEVNTPRILGRLIWTIAEHIDLEGLDPLLADDPDDPLNIIIANIHKVLFNLDAAATTSNRLQDVQAVLLCAQRMGSRHARAGQLLTKELEEYRNHAAADTVSKHQTRLILQRIKYVSNLPERKWAGVSETRGDYPFSHHKLTVQFYEPSAAQDRKLEGLIHKAILELWRPKPTELTLFLTKGVDSTSIKVPPTAYPLTGSSDPCYIEAYHLADTNDGRVTLHLKIINLTELELNRVDIRVGLSGALYFMDGSPQAVRQLRNLVSQDPVQCSVTVGVSQFERCGFWVQVLYYPFRGARGEYDGDYIEEDPQIMKQKRGSKAELGEPVILRCQPYKIPLTELLLPHKISPVEFFRLWPSLPAVAEYTGTYMYEGSGFMATAAQQYGASPFLSGLKSLSSKPFHRVCSHIIRTVAGFQLCYAAKTWHGGFVGMMIFGASEVSRNMDLGDETTTMMCKFVVRASEASITKQIESDIQGWCDDLTDGGVEYMPEDEVKATAAEKLKISMERIALLKAAQPKKTSKIEEESENEEEEEGEEEDDDEEVKEKKEKEEGKDKEEKKKKEKEKGTFSKLTAEETEHMALQAAVLQEWHILCKDRKYTKVN</sequence>
<name>TPLAT_ARATH</name>
<feature type="chain" id="PRO_0000413982" description="Protein TPLATE">
    <location>
        <begin position="1"/>
        <end position="1176"/>
    </location>
</feature>
<feature type="region of interest" description="Disordered" evidence="2">
    <location>
        <begin position="1088"/>
        <end position="1149"/>
    </location>
</feature>
<feature type="coiled-coil region" evidence="1">
    <location>
        <begin position="1071"/>
        <end position="1156"/>
    </location>
</feature>
<feature type="compositionally biased region" description="Acidic residues" evidence="2">
    <location>
        <begin position="1098"/>
        <end position="1116"/>
    </location>
</feature>
<feature type="compositionally biased region" description="Basic and acidic residues" evidence="2">
    <location>
        <begin position="1117"/>
        <end position="1149"/>
    </location>
</feature>
<feature type="modified residue" description="Phosphoserine" evidence="7 8">
    <location>
        <position position="1100"/>
    </location>
</feature>
<gene>
    <name type="primary">TPLATE</name>
    <name type="synonym">T22</name>
    <name type="ordered locus">At3g01780</name>
    <name type="ORF">F28J7.11</name>
    <name type="ORF">F4P13.33</name>
</gene>